<name>KATG_DESHY</name>
<proteinExistence type="inferred from homology"/>
<evidence type="ECO:0000255" key="1">
    <source>
        <dbReference type="HAMAP-Rule" id="MF_01961"/>
    </source>
</evidence>
<evidence type="ECO:0000256" key="2">
    <source>
        <dbReference type="SAM" id="MobiDB-lite"/>
    </source>
</evidence>
<protein>
    <recommendedName>
        <fullName evidence="1">Catalase-peroxidase</fullName>
        <shortName evidence="1">CP</shortName>
        <ecNumber evidence="1">1.11.1.21</ecNumber>
    </recommendedName>
    <alternativeName>
        <fullName evidence="1">Peroxidase/catalase</fullName>
    </alternativeName>
</protein>
<comment type="function">
    <text evidence="1">Bifunctional enzyme with both catalase and broad-spectrum peroxidase activity.</text>
</comment>
<comment type="catalytic activity">
    <reaction evidence="1">
        <text>H2O2 + AH2 = A + 2 H2O</text>
        <dbReference type="Rhea" id="RHEA:30275"/>
        <dbReference type="ChEBI" id="CHEBI:13193"/>
        <dbReference type="ChEBI" id="CHEBI:15377"/>
        <dbReference type="ChEBI" id="CHEBI:16240"/>
        <dbReference type="ChEBI" id="CHEBI:17499"/>
        <dbReference type="EC" id="1.11.1.21"/>
    </reaction>
</comment>
<comment type="catalytic activity">
    <reaction evidence="1">
        <text>2 H2O2 = O2 + 2 H2O</text>
        <dbReference type="Rhea" id="RHEA:20309"/>
        <dbReference type="ChEBI" id="CHEBI:15377"/>
        <dbReference type="ChEBI" id="CHEBI:15379"/>
        <dbReference type="ChEBI" id="CHEBI:16240"/>
        <dbReference type="EC" id="1.11.1.21"/>
    </reaction>
</comment>
<comment type="cofactor">
    <cofactor evidence="1">
        <name>heme b</name>
        <dbReference type="ChEBI" id="CHEBI:60344"/>
    </cofactor>
    <text evidence="1">Binds 1 heme b (iron(II)-protoporphyrin IX) group per dimer.</text>
</comment>
<comment type="subunit">
    <text evidence="1">Homodimer or homotetramer.</text>
</comment>
<comment type="PTM">
    <text evidence="1">Formation of the three residue Trp-Tyr-Met cross-link is important for the catalase, but not the peroxidase activity of the enzyme.</text>
</comment>
<comment type="similarity">
    <text evidence="1">Belongs to the peroxidase family. Peroxidase/catalase subfamily.</text>
</comment>
<reference key="1">
    <citation type="journal article" date="2006" name="J. Bacteriol.">
        <title>Complete genome sequence of the dehalorespiring bacterium Desulfitobacterium hafniense Y51 and comparison with Dehalococcoides ethenogenes 195.</title>
        <authorList>
            <person name="Nonaka H."/>
            <person name="Keresztes G."/>
            <person name="Shinoda Y."/>
            <person name="Ikenaga Y."/>
            <person name="Abe M."/>
            <person name="Naito K."/>
            <person name="Inatomi K."/>
            <person name="Furukawa K."/>
            <person name="Inui M."/>
            <person name="Yukawa H."/>
        </authorList>
    </citation>
    <scope>NUCLEOTIDE SEQUENCE [LARGE SCALE GENOMIC DNA]</scope>
    <source>
        <strain>Y51</strain>
    </source>
</reference>
<keyword id="KW-0349">Heme</keyword>
<keyword id="KW-0376">Hydrogen peroxide</keyword>
<keyword id="KW-0408">Iron</keyword>
<keyword id="KW-0479">Metal-binding</keyword>
<keyword id="KW-0560">Oxidoreductase</keyword>
<keyword id="KW-0575">Peroxidase</keyword>
<keyword id="KW-1185">Reference proteome</keyword>
<sequence>MEEKKCPVTGHTQHTPTGGGTKNKDWWPNQLNLNILHQNSALGNPMDPDFNYAEEFKKLDLAAVKKDLYALMTDSQDWWPADYGHYGPLFIRMAWHSAGTYRLNDGRGGAGDGTQRFAPLNSWPDNVNLDKARRLLWPIKQKYGKKISWADLMVLAGNCALESMGFKTFGFAGGREDVWEPQEDIYWGSEGEWLGDQRYSGDRDLENPLAAVQMGLIYVNPEGPNGQPSVLASGRDVRDTFKRMAMNDEETVALVAGGHTFGKCHGAGPASHVGPEPEAAPLEEQGLGWKSTFRSGKGGDTIGSGIEGAWKPNPTTWDMGYLETLFKYDWDLVKSPAGAWQWVPTDPAAADTVQDAHDPAKRHAPMMTTADLSLRMDPIFGPIAKRFRDNPEEFADAFARAWFKLTHRDMGPRSRYLGPEVPEEELIWQDPVPPVDHELIDEQDIADLKAKLLASGLSVSQLVSTAWASASTFRGSDKRGGANGARIRLAPQKDWEINQPAQLAEVLAALEGIQTEFNSSQSGTKKVSLADLIVLGGAAAIEQAARNAGHTLVLPFTPGRTDATQEQTEIYSFAVMEPKADGFRNYLKGKSSAPAEEMLVDRAQLLTLTAPEMTVLLGGLRVLNANYGQSKHGVFTQRPETLTNDFFVNLLDMGTEWKAVSEEKALYEGRDRATGELKWTGTRVDLVFGSNSQLRALAEVYACSDSQDKFLQDFVSAWNKVMNADRFDLA</sequence>
<organism>
    <name type="scientific">Desulfitobacterium hafniense (strain Y51)</name>
    <dbReference type="NCBI Taxonomy" id="138119"/>
    <lineage>
        <taxon>Bacteria</taxon>
        <taxon>Bacillati</taxon>
        <taxon>Bacillota</taxon>
        <taxon>Clostridia</taxon>
        <taxon>Eubacteriales</taxon>
        <taxon>Desulfitobacteriaceae</taxon>
        <taxon>Desulfitobacterium</taxon>
    </lineage>
</organism>
<accession>Q24YU1</accession>
<feature type="chain" id="PRO_0000354767" description="Catalase-peroxidase">
    <location>
        <begin position="1"/>
        <end position="730"/>
    </location>
</feature>
<feature type="region of interest" description="Disordered" evidence="2">
    <location>
        <begin position="1"/>
        <end position="25"/>
    </location>
</feature>
<feature type="active site" description="Proton acceptor" evidence="1">
    <location>
        <position position="96"/>
    </location>
</feature>
<feature type="binding site" description="axial binding residue" evidence="1">
    <location>
        <position position="259"/>
    </location>
    <ligand>
        <name>heme b</name>
        <dbReference type="ChEBI" id="CHEBI:60344"/>
    </ligand>
    <ligandPart>
        <name>Fe</name>
        <dbReference type="ChEBI" id="CHEBI:18248"/>
    </ligandPart>
</feature>
<feature type="site" description="Transition state stabilizer" evidence="1">
    <location>
        <position position="92"/>
    </location>
</feature>
<feature type="cross-link" description="Tryptophyl-tyrosyl-methioninium (Trp-Tyr) (with M-244)" evidence="1">
    <location>
        <begin position="95"/>
        <end position="218"/>
    </location>
</feature>
<feature type="cross-link" description="Tryptophyl-tyrosyl-methioninium (Tyr-Met) (with W-95)" evidence="1">
    <location>
        <begin position="218"/>
        <end position="244"/>
    </location>
</feature>
<gene>
    <name evidence="1" type="primary">katG</name>
    <name type="ordered locus">DSY1012</name>
</gene>
<dbReference type="EC" id="1.11.1.21" evidence="1"/>
<dbReference type="EMBL" id="AP008230">
    <property type="protein sequence ID" value="BAE82801.1"/>
    <property type="molecule type" value="Genomic_DNA"/>
</dbReference>
<dbReference type="RefSeq" id="WP_005814129.1">
    <property type="nucleotide sequence ID" value="NC_007907.1"/>
</dbReference>
<dbReference type="SMR" id="Q24YU1"/>
<dbReference type="STRING" id="138119.DSY1012"/>
<dbReference type="PeroxiBase" id="3653">
    <property type="entry name" value="DhaCP01_Y51"/>
</dbReference>
<dbReference type="KEGG" id="dsy:DSY1012"/>
<dbReference type="eggNOG" id="COG0376">
    <property type="taxonomic scope" value="Bacteria"/>
</dbReference>
<dbReference type="HOGENOM" id="CLU_025424_2_0_9"/>
<dbReference type="Proteomes" id="UP000001946">
    <property type="component" value="Chromosome"/>
</dbReference>
<dbReference type="GO" id="GO:0005829">
    <property type="term" value="C:cytosol"/>
    <property type="evidence" value="ECO:0007669"/>
    <property type="project" value="TreeGrafter"/>
</dbReference>
<dbReference type="GO" id="GO:0004096">
    <property type="term" value="F:catalase activity"/>
    <property type="evidence" value="ECO:0007669"/>
    <property type="project" value="UniProtKB-UniRule"/>
</dbReference>
<dbReference type="GO" id="GO:0020037">
    <property type="term" value="F:heme binding"/>
    <property type="evidence" value="ECO:0007669"/>
    <property type="project" value="InterPro"/>
</dbReference>
<dbReference type="GO" id="GO:0046872">
    <property type="term" value="F:metal ion binding"/>
    <property type="evidence" value="ECO:0007669"/>
    <property type="project" value="UniProtKB-KW"/>
</dbReference>
<dbReference type="GO" id="GO:0070301">
    <property type="term" value="P:cellular response to hydrogen peroxide"/>
    <property type="evidence" value="ECO:0007669"/>
    <property type="project" value="TreeGrafter"/>
</dbReference>
<dbReference type="GO" id="GO:0042744">
    <property type="term" value="P:hydrogen peroxide catabolic process"/>
    <property type="evidence" value="ECO:0007669"/>
    <property type="project" value="UniProtKB-KW"/>
</dbReference>
<dbReference type="CDD" id="cd00649">
    <property type="entry name" value="catalase_peroxidase_1"/>
    <property type="match status" value="1"/>
</dbReference>
<dbReference type="CDD" id="cd08200">
    <property type="entry name" value="catalase_peroxidase_2"/>
    <property type="match status" value="1"/>
</dbReference>
<dbReference type="FunFam" id="1.10.420.10:FF:000002">
    <property type="entry name" value="Catalase-peroxidase"/>
    <property type="match status" value="1"/>
</dbReference>
<dbReference type="FunFam" id="1.10.420.10:FF:000004">
    <property type="entry name" value="Catalase-peroxidase"/>
    <property type="match status" value="1"/>
</dbReference>
<dbReference type="FunFam" id="1.10.520.10:FF:000002">
    <property type="entry name" value="Catalase-peroxidase"/>
    <property type="match status" value="1"/>
</dbReference>
<dbReference type="FunFam" id="1.10.520.10:FF:000004">
    <property type="entry name" value="Catalase-peroxidase"/>
    <property type="match status" value="1"/>
</dbReference>
<dbReference type="Gene3D" id="1.10.520.10">
    <property type="match status" value="2"/>
</dbReference>
<dbReference type="Gene3D" id="1.10.420.10">
    <property type="entry name" value="Peroxidase, domain 2"/>
    <property type="match status" value="2"/>
</dbReference>
<dbReference type="HAMAP" id="MF_01961">
    <property type="entry name" value="Catal_peroxid"/>
    <property type="match status" value="1"/>
</dbReference>
<dbReference type="InterPro" id="IPR000763">
    <property type="entry name" value="Catalase_peroxidase"/>
</dbReference>
<dbReference type="InterPro" id="IPR002016">
    <property type="entry name" value="Haem_peroxidase"/>
</dbReference>
<dbReference type="InterPro" id="IPR010255">
    <property type="entry name" value="Haem_peroxidase_sf"/>
</dbReference>
<dbReference type="InterPro" id="IPR019794">
    <property type="entry name" value="Peroxidases_AS"/>
</dbReference>
<dbReference type="InterPro" id="IPR019793">
    <property type="entry name" value="Peroxidases_heam-ligand_BS"/>
</dbReference>
<dbReference type="NCBIfam" id="TIGR00198">
    <property type="entry name" value="cat_per_HPI"/>
    <property type="match status" value="1"/>
</dbReference>
<dbReference type="NCBIfam" id="NF011635">
    <property type="entry name" value="PRK15061.1"/>
    <property type="match status" value="1"/>
</dbReference>
<dbReference type="PANTHER" id="PTHR30555:SF0">
    <property type="entry name" value="CATALASE-PEROXIDASE"/>
    <property type="match status" value="1"/>
</dbReference>
<dbReference type="PANTHER" id="PTHR30555">
    <property type="entry name" value="HYDROPEROXIDASE I, BIFUNCTIONAL CATALASE-PEROXIDASE"/>
    <property type="match status" value="1"/>
</dbReference>
<dbReference type="Pfam" id="PF00141">
    <property type="entry name" value="peroxidase"/>
    <property type="match status" value="2"/>
</dbReference>
<dbReference type="PRINTS" id="PR00460">
    <property type="entry name" value="BPEROXIDASE"/>
</dbReference>
<dbReference type="PRINTS" id="PR00458">
    <property type="entry name" value="PEROXIDASE"/>
</dbReference>
<dbReference type="SUPFAM" id="SSF48113">
    <property type="entry name" value="Heme-dependent peroxidases"/>
    <property type="match status" value="2"/>
</dbReference>
<dbReference type="PROSITE" id="PS00435">
    <property type="entry name" value="PEROXIDASE_1"/>
    <property type="match status" value="1"/>
</dbReference>
<dbReference type="PROSITE" id="PS00436">
    <property type="entry name" value="PEROXIDASE_2"/>
    <property type="match status" value="1"/>
</dbReference>
<dbReference type="PROSITE" id="PS50873">
    <property type="entry name" value="PEROXIDASE_4"/>
    <property type="match status" value="1"/>
</dbReference>